<keyword id="KW-0030">Aminoacyl-tRNA synthetase</keyword>
<keyword id="KW-0067">ATP-binding</keyword>
<keyword id="KW-0963">Cytoplasm</keyword>
<keyword id="KW-0436">Ligase</keyword>
<keyword id="KW-0547">Nucleotide-binding</keyword>
<keyword id="KW-0648">Protein biosynthesis</keyword>
<name>SYE_CHLP6</name>
<organism>
    <name type="scientific">Chlamydophila psittaci (strain ATCC VR-125 / 6BC)</name>
    <name type="common">Chlamydia psittaci</name>
    <dbReference type="NCBI Taxonomy" id="331636"/>
    <lineage>
        <taxon>Bacteria</taxon>
        <taxon>Pseudomonadati</taxon>
        <taxon>Chlamydiota</taxon>
        <taxon>Chlamydiia</taxon>
        <taxon>Chlamydiales</taxon>
        <taxon>Chlamydiaceae</taxon>
        <taxon>Chlamydia/Chlamydophila group</taxon>
        <taxon>Chlamydia</taxon>
    </lineage>
</organism>
<feature type="chain" id="PRO_0000119540" description="Glutamate--tRNA ligase">
    <location>
        <begin position="1"/>
        <end position="505"/>
    </location>
</feature>
<feature type="short sequence motif" description="'HIGH' region" evidence="1">
    <location>
        <begin position="12"/>
        <end position="22"/>
    </location>
</feature>
<feature type="short sequence motif" description="'KMSKS' region" evidence="1">
    <location>
        <begin position="253"/>
        <end position="257"/>
    </location>
</feature>
<feature type="binding site" evidence="1">
    <location>
        <position position="256"/>
    </location>
    <ligand>
        <name>ATP</name>
        <dbReference type="ChEBI" id="CHEBI:30616"/>
    </ligand>
</feature>
<accession>P59691</accession>
<accession>F0T375</accession>
<accession>P94662</accession>
<accession>Q06560</accession>
<dbReference type="EC" id="6.1.1.17" evidence="1"/>
<dbReference type="EMBL" id="CP002549">
    <property type="protein sequence ID" value="ADZ18786.1"/>
    <property type="molecule type" value="Genomic_DNA"/>
</dbReference>
<dbReference type="EMBL" id="CP002586">
    <property type="protein sequence ID" value="AEB55211.1"/>
    <property type="molecule type" value="Genomic_DNA"/>
</dbReference>
<dbReference type="EMBL" id="L13598">
    <property type="protein sequence ID" value="AAA23122.1"/>
    <property type="status" value="ALT_INIT"/>
    <property type="molecule type" value="Genomic_DNA"/>
</dbReference>
<dbReference type="PIR" id="A36909">
    <property type="entry name" value="A36909"/>
</dbReference>
<dbReference type="RefSeq" id="WP_006342859.1">
    <property type="nucleotide sequence ID" value="NC_017287.1"/>
</dbReference>
<dbReference type="SMR" id="P59691"/>
<dbReference type="GeneID" id="12242467"/>
<dbReference type="KEGG" id="chb:G5O_0208"/>
<dbReference type="KEGG" id="chp:CPSIT_0206"/>
<dbReference type="PATRIC" id="fig|331636.3.peg.193"/>
<dbReference type="HOGENOM" id="CLU_015768_6_3_0"/>
<dbReference type="GO" id="GO:0005829">
    <property type="term" value="C:cytosol"/>
    <property type="evidence" value="ECO:0007669"/>
    <property type="project" value="TreeGrafter"/>
</dbReference>
<dbReference type="GO" id="GO:0005524">
    <property type="term" value="F:ATP binding"/>
    <property type="evidence" value="ECO:0007669"/>
    <property type="project" value="UniProtKB-UniRule"/>
</dbReference>
<dbReference type="GO" id="GO:0004818">
    <property type="term" value="F:glutamate-tRNA ligase activity"/>
    <property type="evidence" value="ECO:0007669"/>
    <property type="project" value="UniProtKB-UniRule"/>
</dbReference>
<dbReference type="GO" id="GO:0000049">
    <property type="term" value="F:tRNA binding"/>
    <property type="evidence" value="ECO:0007669"/>
    <property type="project" value="InterPro"/>
</dbReference>
<dbReference type="GO" id="GO:0008270">
    <property type="term" value="F:zinc ion binding"/>
    <property type="evidence" value="ECO:0007669"/>
    <property type="project" value="InterPro"/>
</dbReference>
<dbReference type="GO" id="GO:0006424">
    <property type="term" value="P:glutamyl-tRNA aminoacylation"/>
    <property type="evidence" value="ECO:0007669"/>
    <property type="project" value="UniProtKB-UniRule"/>
</dbReference>
<dbReference type="CDD" id="cd00808">
    <property type="entry name" value="GluRS_core"/>
    <property type="match status" value="1"/>
</dbReference>
<dbReference type="FunFam" id="3.40.50.620:FF:000045">
    <property type="entry name" value="Glutamate--tRNA ligase, mitochondrial"/>
    <property type="match status" value="1"/>
</dbReference>
<dbReference type="Gene3D" id="1.10.10.350">
    <property type="match status" value="1"/>
</dbReference>
<dbReference type="Gene3D" id="3.40.50.620">
    <property type="entry name" value="HUPs"/>
    <property type="match status" value="1"/>
</dbReference>
<dbReference type="HAMAP" id="MF_00022">
    <property type="entry name" value="Glu_tRNA_synth_type1"/>
    <property type="match status" value="1"/>
</dbReference>
<dbReference type="InterPro" id="IPR045462">
    <property type="entry name" value="aa-tRNA-synth_I_cd-bd"/>
</dbReference>
<dbReference type="InterPro" id="IPR020751">
    <property type="entry name" value="aa-tRNA-synth_I_codon-bd_sub2"/>
</dbReference>
<dbReference type="InterPro" id="IPR001412">
    <property type="entry name" value="aa-tRNA-synth_I_CS"/>
</dbReference>
<dbReference type="InterPro" id="IPR008925">
    <property type="entry name" value="aa_tRNA-synth_I_cd-bd_sf"/>
</dbReference>
<dbReference type="InterPro" id="IPR004527">
    <property type="entry name" value="Glu-tRNA-ligase_bac/mito"/>
</dbReference>
<dbReference type="InterPro" id="IPR000924">
    <property type="entry name" value="Glu/Gln-tRNA-synth"/>
</dbReference>
<dbReference type="InterPro" id="IPR020058">
    <property type="entry name" value="Glu/Gln-tRNA-synth_Ib_cat-dom"/>
</dbReference>
<dbReference type="InterPro" id="IPR049940">
    <property type="entry name" value="GluQ/Sye"/>
</dbReference>
<dbReference type="InterPro" id="IPR033910">
    <property type="entry name" value="GluRS_core"/>
</dbReference>
<dbReference type="InterPro" id="IPR014729">
    <property type="entry name" value="Rossmann-like_a/b/a_fold"/>
</dbReference>
<dbReference type="NCBIfam" id="TIGR00464">
    <property type="entry name" value="gltX_bact"/>
    <property type="match status" value="1"/>
</dbReference>
<dbReference type="PANTHER" id="PTHR43311">
    <property type="entry name" value="GLUTAMATE--TRNA LIGASE"/>
    <property type="match status" value="1"/>
</dbReference>
<dbReference type="PANTHER" id="PTHR43311:SF2">
    <property type="entry name" value="GLUTAMATE--TRNA LIGASE, MITOCHONDRIAL-RELATED"/>
    <property type="match status" value="1"/>
</dbReference>
<dbReference type="Pfam" id="PF19269">
    <property type="entry name" value="Anticodon_2"/>
    <property type="match status" value="1"/>
</dbReference>
<dbReference type="Pfam" id="PF00749">
    <property type="entry name" value="tRNA-synt_1c"/>
    <property type="match status" value="1"/>
</dbReference>
<dbReference type="PRINTS" id="PR00987">
    <property type="entry name" value="TRNASYNTHGLU"/>
</dbReference>
<dbReference type="SUPFAM" id="SSF48163">
    <property type="entry name" value="An anticodon-binding domain of class I aminoacyl-tRNA synthetases"/>
    <property type="match status" value="1"/>
</dbReference>
<dbReference type="SUPFAM" id="SSF52374">
    <property type="entry name" value="Nucleotidylyl transferase"/>
    <property type="match status" value="1"/>
</dbReference>
<dbReference type="PROSITE" id="PS00178">
    <property type="entry name" value="AA_TRNA_LIGASE_I"/>
    <property type="match status" value="1"/>
</dbReference>
<evidence type="ECO:0000255" key="1">
    <source>
        <dbReference type="HAMAP-Rule" id="MF_00022"/>
    </source>
</evidence>
<evidence type="ECO:0000305" key="2"/>
<sequence>MAWENVRVRVAPSPTGDPHVGTAYMALFNEIFAKRFNGKMILRIEDTDQTRSRDDYEKNIFSALKWCGIQWDEGPDIGGPYGPYRQSERTEIYREYAELLLKTDYAYKCFATPKELEEMRAVATTLGYRGGYDRRYRYLSPEEIEARTREGQPYTIRLKVPLTGECVLDDYCKGRVVFPWADVDDQVLIKSDGFPTYHFANVVDDHLMGITHVLRGEEWLSSTPKHLLLYEAFGWEAPTFLHMPLLLNPDGTKLSKRKNPTSIFYYRDAGYVKEAFMNFLTLMGYSMEGDEEIYSLEKLIANFDPRRIGKSGAVFDTRKLDWMNKHYLTHEKSSESLLAKLKDWLINDEFFLKILPLCQSRITTLAEFIGFTGFFFSVLPEYSKEELLPATIVEEKAAILLYSYVKYLEKADLWVKDQFYQGSKWLSSAFQVHHKKVVIPLLYVAITGKKQGLPLFDSMELLGKPRTRARLVHAQNLLGGVPKKIQTTIDKVLKEEDFENKIFEF</sequence>
<reference key="1">
    <citation type="journal article" date="2011" name="J. Bacteriol.">
        <title>Full-length de novo sequence of the Chlamydophila psittaci type strain, 6BC.</title>
        <authorList>
            <person name="Voigt A."/>
            <person name="Schofl G."/>
            <person name="Heidrich A."/>
            <person name="Sachse K."/>
            <person name="Saluz H.P."/>
        </authorList>
    </citation>
    <scope>NUCLEOTIDE SEQUENCE [LARGE SCALE GENOMIC DNA]</scope>
    <source>
        <strain>ATCC VR-125 / 6BC</strain>
    </source>
</reference>
<reference key="2">
    <citation type="journal article" date="2011" name="J. Bacteriol.">
        <title>Genome sequences of the zoonotic pathogens Chlamydia psittaci 6BC and Cal10.</title>
        <authorList>
            <person name="Grinblat-Huse V."/>
            <person name="Drabek E.F."/>
            <person name="Creasy H.H."/>
            <person name="Daugherty S.C."/>
            <person name="Jones K.M."/>
            <person name="Santana-Cruz I."/>
            <person name="Tallon L.J."/>
            <person name="Read T.D."/>
            <person name="Hatch T.P."/>
            <person name="Bavoil P."/>
            <person name="Myers G.S."/>
        </authorList>
    </citation>
    <scope>NUCLEOTIDE SEQUENCE [LARGE SCALE GENOMIC DNA]</scope>
    <source>
        <strain>ATCC VR-125 / 6BC</strain>
    </source>
</reference>
<reference key="3">
    <citation type="journal article" date="1993" name="J. Bacteriol.">
        <title>Identification of an early-stage gene of Chlamydia psittaci 6BC.</title>
        <authorList>
            <person name="Wichlan D.W."/>
            <person name="Hatch T.P."/>
        </authorList>
    </citation>
    <scope>NUCLEOTIDE SEQUENCE [GENOMIC DNA] OF 1-368</scope>
    <source>
        <strain>ATCC VR-125 / 6BC</strain>
    </source>
</reference>
<gene>
    <name evidence="1" type="primary">gltX</name>
    <name type="ordered locus">CPSIT_0206</name>
    <name type="ordered locus">G5O_0208</name>
</gene>
<comment type="function">
    <text evidence="1">Catalyzes the attachment of glutamate to tRNA(Glu) in a two-step reaction: glutamate is first activated by ATP to form Glu-AMP and then transferred to the acceptor end of tRNA(Glu).</text>
</comment>
<comment type="catalytic activity">
    <reaction evidence="1">
        <text>tRNA(Glu) + L-glutamate + ATP = L-glutamyl-tRNA(Glu) + AMP + diphosphate</text>
        <dbReference type="Rhea" id="RHEA:23540"/>
        <dbReference type="Rhea" id="RHEA-COMP:9663"/>
        <dbReference type="Rhea" id="RHEA-COMP:9680"/>
        <dbReference type="ChEBI" id="CHEBI:29985"/>
        <dbReference type="ChEBI" id="CHEBI:30616"/>
        <dbReference type="ChEBI" id="CHEBI:33019"/>
        <dbReference type="ChEBI" id="CHEBI:78442"/>
        <dbReference type="ChEBI" id="CHEBI:78520"/>
        <dbReference type="ChEBI" id="CHEBI:456215"/>
        <dbReference type="EC" id="6.1.1.17"/>
    </reaction>
</comment>
<comment type="subunit">
    <text evidence="1">Monomer.</text>
</comment>
<comment type="subcellular location">
    <subcellularLocation>
        <location evidence="1">Cytoplasm</location>
    </subcellularLocation>
</comment>
<comment type="similarity">
    <text evidence="1">Belongs to the class-I aminoacyl-tRNA synthetase family. Glutamate--tRNA ligase type 1 subfamily.</text>
</comment>
<comment type="sequence caution" evidence="2">
    <conflict type="erroneous initiation">
        <sequence resource="EMBL-CDS" id="AAA23122"/>
    </conflict>
    <text>Extended N-terminus.</text>
</comment>
<proteinExistence type="inferred from homology"/>
<protein>
    <recommendedName>
        <fullName evidence="1">Glutamate--tRNA ligase</fullName>
        <ecNumber evidence="1">6.1.1.17</ecNumber>
    </recommendedName>
    <alternativeName>
        <fullName evidence="1">Glutamyl-tRNA synthetase</fullName>
        <shortName evidence="1">GluRS</shortName>
    </alternativeName>
</protein>